<protein>
    <recommendedName>
        <fullName>Amyloid beta A4 precursor protein-binding family B member 1-interacting protein</fullName>
    </recommendedName>
    <alternativeName>
        <fullName>APBB1-interacting protein 1</fullName>
    </alternativeName>
</protein>
<gene>
    <name type="primary">APBB1IP</name>
    <name type="ORF">RCJMB04_8c12</name>
</gene>
<accession>Q5ZL23</accession>
<keyword id="KW-1003">Cell membrane</keyword>
<keyword id="KW-0963">Cytoplasm</keyword>
<keyword id="KW-0206">Cytoskeleton</keyword>
<keyword id="KW-0472">Membrane</keyword>
<keyword id="KW-1185">Reference proteome</keyword>
<name>AB1IP_CHICK</name>
<evidence type="ECO:0000250" key="1"/>
<evidence type="ECO:0000255" key="2">
    <source>
        <dbReference type="PROSITE-ProRule" id="PRU00145"/>
    </source>
</evidence>
<evidence type="ECO:0000255" key="3">
    <source>
        <dbReference type="PROSITE-ProRule" id="PRU00166"/>
    </source>
</evidence>
<evidence type="ECO:0000256" key="4">
    <source>
        <dbReference type="SAM" id="MobiDB-lite"/>
    </source>
</evidence>
<evidence type="ECO:0000305" key="5"/>
<organism>
    <name type="scientific">Gallus gallus</name>
    <name type="common">Chicken</name>
    <dbReference type="NCBI Taxonomy" id="9031"/>
    <lineage>
        <taxon>Eukaryota</taxon>
        <taxon>Metazoa</taxon>
        <taxon>Chordata</taxon>
        <taxon>Craniata</taxon>
        <taxon>Vertebrata</taxon>
        <taxon>Euteleostomi</taxon>
        <taxon>Archelosauria</taxon>
        <taxon>Archosauria</taxon>
        <taxon>Dinosauria</taxon>
        <taxon>Saurischia</taxon>
        <taxon>Theropoda</taxon>
        <taxon>Coelurosauria</taxon>
        <taxon>Aves</taxon>
        <taxon>Neognathae</taxon>
        <taxon>Galloanserae</taxon>
        <taxon>Galliformes</taxon>
        <taxon>Phasianidae</taxon>
        <taxon>Phasianinae</taxon>
        <taxon>Gallus</taxon>
    </lineage>
</organism>
<comment type="function">
    <text>Appears to function in the signal transduction from Ras activation to actin cytoskeletal remodeling.</text>
</comment>
<comment type="subcellular location">
    <subcellularLocation>
        <location evidence="1">Cell membrane</location>
        <topology evidence="1">Peripheral membrane protein</topology>
        <orientation evidence="1">Cytoplasmic side</orientation>
    </subcellularLocation>
    <subcellularLocation>
        <location evidence="1">Cytoplasm</location>
        <location evidence="1">Cytoskeleton</location>
    </subcellularLocation>
</comment>
<comment type="similarity">
    <text evidence="5">Belongs to the MRL family.</text>
</comment>
<feature type="chain" id="PRO_0000181349" description="Amyloid beta A4 precursor protein-binding family B member 1-interacting protein">
    <location>
        <begin position="1"/>
        <end position="485"/>
    </location>
</feature>
<feature type="domain" description="Ras-associating" evidence="3">
    <location>
        <begin position="175"/>
        <end position="262"/>
    </location>
</feature>
<feature type="domain" description="PH" evidence="2">
    <location>
        <begin position="305"/>
        <end position="414"/>
    </location>
</feature>
<feature type="region of interest" description="Disordered" evidence="4">
    <location>
        <begin position="84"/>
        <end position="157"/>
    </location>
</feature>
<feature type="compositionally biased region" description="Polar residues" evidence="4">
    <location>
        <begin position="84"/>
        <end position="107"/>
    </location>
</feature>
<feature type="compositionally biased region" description="Pro residues" evidence="4">
    <location>
        <begin position="125"/>
        <end position="147"/>
    </location>
</feature>
<proteinExistence type="evidence at transcript level"/>
<dbReference type="EMBL" id="AJ719911">
    <property type="protein sequence ID" value="CAG31570.1"/>
    <property type="molecule type" value="mRNA"/>
</dbReference>
<dbReference type="SMR" id="Q5ZL23"/>
<dbReference type="FunCoup" id="Q5ZL23">
    <property type="interactions" value="182"/>
</dbReference>
<dbReference type="STRING" id="9031.ENSGALP00000069079"/>
<dbReference type="PaxDb" id="9031-ENSGALP00000012240"/>
<dbReference type="VEuPathDB" id="HostDB:geneid_420492"/>
<dbReference type="eggNOG" id="KOG3751">
    <property type="taxonomic scope" value="Eukaryota"/>
</dbReference>
<dbReference type="InParanoid" id="Q5ZL23"/>
<dbReference type="OrthoDB" id="6235964at2759"/>
<dbReference type="PhylomeDB" id="Q5ZL23"/>
<dbReference type="Proteomes" id="UP000000539">
    <property type="component" value="Unassembled WGS sequence"/>
</dbReference>
<dbReference type="GO" id="GO:0005856">
    <property type="term" value="C:cytoskeleton"/>
    <property type="evidence" value="ECO:0007669"/>
    <property type="project" value="UniProtKB-SubCell"/>
</dbReference>
<dbReference type="GO" id="GO:0005829">
    <property type="term" value="C:cytosol"/>
    <property type="evidence" value="ECO:0000318"/>
    <property type="project" value="GO_Central"/>
</dbReference>
<dbReference type="GO" id="GO:0005886">
    <property type="term" value="C:plasma membrane"/>
    <property type="evidence" value="ECO:0000318"/>
    <property type="project" value="GO_Central"/>
</dbReference>
<dbReference type="GO" id="GO:0007165">
    <property type="term" value="P:signal transduction"/>
    <property type="evidence" value="ECO:0007669"/>
    <property type="project" value="InterPro"/>
</dbReference>
<dbReference type="CDD" id="cd01259">
    <property type="entry name" value="PH_APBB1IP"/>
    <property type="match status" value="1"/>
</dbReference>
<dbReference type="CDD" id="cd16137">
    <property type="entry name" value="RA_MRL_RIAM"/>
    <property type="match status" value="1"/>
</dbReference>
<dbReference type="FunFam" id="3.10.20.90:FF:000124">
    <property type="entry name" value="amyloid beta A4 precursor protein-binding family B member 1-interacting protein-like"/>
    <property type="match status" value="1"/>
</dbReference>
<dbReference type="FunFam" id="2.30.29.30:FF:000048">
    <property type="entry name" value="Ras association (RalGDS/AF-6) and pleckstrin homology domains 1"/>
    <property type="match status" value="1"/>
</dbReference>
<dbReference type="Gene3D" id="3.10.20.90">
    <property type="entry name" value="Phosphatidylinositol 3-kinase Catalytic Subunit, Chain A, domain 1"/>
    <property type="match status" value="1"/>
</dbReference>
<dbReference type="Gene3D" id="2.30.29.30">
    <property type="entry name" value="Pleckstrin-homology domain (PH domain)/Phosphotyrosine-binding domain (PTB)"/>
    <property type="match status" value="1"/>
</dbReference>
<dbReference type="InterPro" id="IPR039664">
    <property type="entry name" value="GRB/APBB1IP"/>
</dbReference>
<dbReference type="InterPro" id="IPR011993">
    <property type="entry name" value="PH-like_dom_sf"/>
</dbReference>
<dbReference type="InterPro" id="IPR039665">
    <property type="entry name" value="PH_APBB1IP"/>
</dbReference>
<dbReference type="InterPro" id="IPR001849">
    <property type="entry name" value="PH_domain"/>
</dbReference>
<dbReference type="InterPro" id="IPR000159">
    <property type="entry name" value="RA_dom"/>
</dbReference>
<dbReference type="InterPro" id="IPR029071">
    <property type="entry name" value="Ubiquitin-like_domsf"/>
</dbReference>
<dbReference type="PANTHER" id="PTHR11243:SF14">
    <property type="entry name" value="AMYLOID BETA A4 PRECURSOR PROTEIN-BINDING FAMILY B MEMBER 1-INTERACTING PROTEIN"/>
    <property type="match status" value="1"/>
</dbReference>
<dbReference type="PANTHER" id="PTHR11243">
    <property type="entry name" value="GROWTH FACTOR RECEPTOR-BOUND PROTEIN"/>
    <property type="match status" value="1"/>
</dbReference>
<dbReference type="Pfam" id="PF00169">
    <property type="entry name" value="PH"/>
    <property type="match status" value="1"/>
</dbReference>
<dbReference type="Pfam" id="PF21989">
    <property type="entry name" value="RA_2"/>
    <property type="match status" value="1"/>
</dbReference>
<dbReference type="SMART" id="SM00233">
    <property type="entry name" value="PH"/>
    <property type="match status" value="1"/>
</dbReference>
<dbReference type="SMART" id="SM00314">
    <property type="entry name" value="RA"/>
    <property type="match status" value="1"/>
</dbReference>
<dbReference type="SUPFAM" id="SSF50729">
    <property type="entry name" value="PH domain-like"/>
    <property type="match status" value="1"/>
</dbReference>
<dbReference type="SUPFAM" id="SSF54236">
    <property type="entry name" value="Ubiquitin-like"/>
    <property type="match status" value="1"/>
</dbReference>
<dbReference type="PROSITE" id="PS50003">
    <property type="entry name" value="PH_DOMAIN"/>
    <property type="match status" value="1"/>
</dbReference>
<dbReference type="PROSITE" id="PS50200">
    <property type="entry name" value="RA"/>
    <property type="match status" value="1"/>
</dbReference>
<sequence length="485" mass="54748">MEQTCDDIDEMFSNLLGEMDMLTQSLGVETVQTPSPKVTNEEFSFTVGFKDLNESLNALEDKDLDALMADLVADINEVEQRTLQAQKTSGNQQSVVTQPSTGTNNDFCSKLSPCATITGQFKNDLPPPPPAPDLDLPPPPPPPPPEPLSQEEQEARAKADKIKLALEKLKEAKIKKLVVKVHMYDNSTKSLMVDERQVTRDVLDNLFEKTHCDCSVDWCLYEVYPELQIERFFEDHENVVEVLSDWTRDSENKVLFLEKKEKYALFKNPQNFYLANKGKNESKEMNDKSKEALLEESFCGASVIVPELEGALYLKEDGKKSWKRRYFLLRASGIYYVPKGKTKTSRDLMCFIQFENMNVYYGSQHKVKYKAPTDHCFVLKHPQIQKESQYIKYLCCDDRATLHQWVTGIRIAKYGKTLYDNYKCAVKKAGLSSQWANQGTLEPAAPTGSLSAGAVQANGQIPRVVLPSSAEVAETQKKVDPAIRA</sequence>
<reference key="1">
    <citation type="journal article" date="2005" name="Genome Biol.">
        <title>Full-length cDNAs from chicken bursal lymphocytes to facilitate gene function analysis.</title>
        <authorList>
            <person name="Caldwell R.B."/>
            <person name="Kierzek A.M."/>
            <person name="Arakawa H."/>
            <person name="Bezzubov Y."/>
            <person name="Zaim J."/>
            <person name="Fiedler P."/>
            <person name="Kutter S."/>
            <person name="Blagodatski A."/>
            <person name="Kostovska D."/>
            <person name="Koter M."/>
            <person name="Plachy J."/>
            <person name="Carninci P."/>
            <person name="Hayashizaki Y."/>
            <person name="Buerstedde J.-M."/>
        </authorList>
    </citation>
    <scope>NUCLEOTIDE SEQUENCE [LARGE SCALE MRNA]</scope>
    <source>
        <strain>CB</strain>
        <tissue>Bursa of Fabricius</tissue>
    </source>
</reference>